<name>WDR62_PIG</name>
<organism>
    <name type="scientific">Sus scrofa</name>
    <name type="common">Pig</name>
    <dbReference type="NCBI Taxonomy" id="9823"/>
    <lineage>
        <taxon>Eukaryota</taxon>
        <taxon>Metazoa</taxon>
        <taxon>Chordata</taxon>
        <taxon>Craniata</taxon>
        <taxon>Vertebrata</taxon>
        <taxon>Euteleostomi</taxon>
        <taxon>Mammalia</taxon>
        <taxon>Eutheria</taxon>
        <taxon>Laurasiatheria</taxon>
        <taxon>Artiodactyla</taxon>
        <taxon>Suina</taxon>
        <taxon>Suidae</taxon>
        <taxon>Sus</taxon>
    </lineage>
</organism>
<accession>Q8HXL3</accession>
<reference key="1">
    <citation type="journal article" date="2001" name="Cytogenet. Cell Genet.">
        <title>Molecular characterization and chromosome assignment of the porcine gene COX7A1 coding for the muscle specific cytochrome c oxidase subunit VIIa-M.</title>
        <authorList>
            <person name="Droegemueller C."/>
            <person name="Kuiper H."/>
            <person name="Voss-Nemitz R."/>
            <person name="Brenig B."/>
            <person name="Distl O."/>
            <person name="Leeb T."/>
        </authorList>
    </citation>
    <scope>NUCLEOTIDE SEQUENCE [GENOMIC DNA]</scope>
</reference>
<dbReference type="EMBL" id="AJ410870">
    <property type="protein sequence ID" value="CAD56046.1"/>
    <property type="molecule type" value="Genomic_DNA"/>
</dbReference>
<dbReference type="RefSeq" id="NP_001121933.1">
    <property type="nucleotide sequence ID" value="NM_001128461.1"/>
</dbReference>
<dbReference type="SMR" id="Q8HXL3"/>
<dbReference type="FunCoup" id="Q8HXL3">
    <property type="interactions" value="58"/>
</dbReference>
<dbReference type="STRING" id="9823.ENSSSCP00000003147"/>
<dbReference type="GlyGen" id="Q8HXL3">
    <property type="glycosylation" value="2 sites"/>
</dbReference>
<dbReference type="PaxDb" id="9823-ENSSSCP00000003147"/>
<dbReference type="PeptideAtlas" id="Q8HXL3"/>
<dbReference type="Ensembl" id="ENSSSCT00015041621.1">
    <property type="protein sequence ID" value="ENSSSCP00015016445.1"/>
    <property type="gene ID" value="ENSSSCG00015031458.1"/>
</dbReference>
<dbReference type="Ensembl" id="ENSSSCT00015041803.1">
    <property type="protein sequence ID" value="ENSSSCP00015016497.1"/>
    <property type="gene ID" value="ENSSSCG00015031458.1"/>
</dbReference>
<dbReference type="Ensembl" id="ENSSSCT00025082695.1">
    <property type="protein sequence ID" value="ENSSSCP00025035922.1"/>
    <property type="gene ID" value="ENSSSCG00025060081.1"/>
</dbReference>
<dbReference type="Ensembl" id="ENSSSCT00035043166.1">
    <property type="protein sequence ID" value="ENSSSCP00035017267.1"/>
    <property type="gene ID" value="ENSSSCG00035032586.1"/>
</dbReference>
<dbReference type="Ensembl" id="ENSSSCT00040102629.1">
    <property type="protein sequence ID" value="ENSSSCP00040046405.1"/>
    <property type="gene ID" value="ENSSSCG00040074223.1"/>
</dbReference>
<dbReference type="Ensembl" id="ENSSSCT00045041551.1">
    <property type="protein sequence ID" value="ENSSSCP00045028833.1"/>
    <property type="gene ID" value="ENSSSCG00045024235.1"/>
</dbReference>
<dbReference type="Ensembl" id="ENSSSCT00045041863.1">
    <property type="protein sequence ID" value="ENSSSCP00045029063.1"/>
    <property type="gene ID" value="ENSSSCG00045024235.1"/>
</dbReference>
<dbReference type="Ensembl" id="ENSSSCT00060093174.1">
    <property type="protein sequence ID" value="ENSSSCP00060040297.1"/>
    <property type="gene ID" value="ENSSSCG00060068255.1"/>
</dbReference>
<dbReference type="Ensembl" id="ENSSSCT00105064880">
    <property type="protein sequence ID" value="ENSSSCP00105046219"/>
    <property type="gene ID" value="ENSSSCG00105033949"/>
</dbReference>
<dbReference type="Ensembl" id="ENSSSCT00130048515">
    <property type="protein sequence ID" value="ENSSSCP00130034179"/>
    <property type="gene ID" value="ENSSSCG00130025031"/>
</dbReference>
<dbReference type="GeneID" id="100144885"/>
<dbReference type="KEGG" id="ssc:100144885"/>
<dbReference type="CTD" id="284403"/>
<dbReference type="eggNOG" id="KOG1408">
    <property type="taxonomic scope" value="Eukaryota"/>
</dbReference>
<dbReference type="InParanoid" id="Q8HXL3"/>
<dbReference type="OrthoDB" id="6154712at2759"/>
<dbReference type="Proteomes" id="UP000008227">
    <property type="component" value="Unplaced"/>
</dbReference>
<dbReference type="Proteomes" id="UP000314985">
    <property type="component" value="Unplaced"/>
</dbReference>
<dbReference type="Proteomes" id="UP000694570">
    <property type="component" value="Unplaced"/>
</dbReference>
<dbReference type="Proteomes" id="UP000694571">
    <property type="component" value="Unplaced"/>
</dbReference>
<dbReference type="Proteomes" id="UP000694720">
    <property type="component" value="Unplaced"/>
</dbReference>
<dbReference type="Proteomes" id="UP000694722">
    <property type="component" value="Unplaced"/>
</dbReference>
<dbReference type="Proteomes" id="UP000694723">
    <property type="component" value="Unplaced"/>
</dbReference>
<dbReference type="Proteomes" id="UP000694724">
    <property type="component" value="Unplaced"/>
</dbReference>
<dbReference type="Proteomes" id="UP000694725">
    <property type="component" value="Unplaced"/>
</dbReference>
<dbReference type="Proteomes" id="UP000694726">
    <property type="component" value="Unplaced"/>
</dbReference>
<dbReference type="Proteomes" id="UP000694727">
    <property type="component" value="Unplaced"/>
</dbReference>
<dbReference type="Proteomes" id="UP000694728">
    <property type="component" value="Unplaced"/>
</dbReference>
<dbReference type="GO" id="GO:0005814">
    <property type="term" value="C:centriole"/>
    <property type="evidence" value="ECO:0007669"/>
    <property type="project" value="UniProtKB-SubCell"/>
</dbReference>
<dbReference type="GO" id="GO:0005813">
    <property type="term" value="C:centrosome"/>
    <property type="evidence" value="ECO:0007669"/>
    <property type="project" value="UniProtKB-SubCell"/>
</dbReference>
<dbReference type="GO" id="GO:0005737">
    <property type="term" value="C:cytoplasm"/>
    <property type="evidence" value="ECO:0007669"/>
    <property type="project" value="UniProtKB-KW"/>
</dbReference>
<dbReference type="GO" id="GO:0005634">
    <property type="term" value="C:nucleus"/>
    <property type="evidence" value="ECO:0000250"/>
    <property type="project" value="UniProtKB"/>
</dbReference>
<dbReference type="GO" id="GO:0000922">
    <property type="term" value="C:spindle pole"/>
    <property type="evidence" value="ECO:0007669"/>
    <property type="project" value="UniProtKB-SubCell"/>
</dbReference>
<dbReference type="GO" id="GO:0021987">
    <property type="term" value="P:cerebral cortex development"/>
    <property type="evidence" value="ECO:0000250"/>
    <property type="project" value="UniProtKB"/>
</dbReference>
<dbReference type="FunFam" id="2.130.10.10:FF:000091">
    <property type="entry name" value="mitogen-activated protein kinase-binding protein 1 isoform X1"/>
    <property type="match status" value="1"/>
</dbReference>
<dbReference type="FunFam" id="2.130.10.10:FF:000536">
    <property type="entry name" value="WD repeat domain 62"/>
    <property type="match status" value="1"/>
</dbReference>
<dbReference type="FunFam" id="2.130.10.10:FF:000046">
    <property type="entry name" value="WD repeat-containing protein 62 isoform 1"/>
    <property type="match status" value="1"/>
</dbReference>
<dbReference type="FunFam" id="2.130.10.10:FF:000124">
    <property type="entry name" value="WD repeat-containing protein 62 isoform 1"/>
    <property type="match status" value="1"/>
</dbReference>
<dbReference type="Gene3D" id="2.130.10.10">
    <property type="entry name" value="YVTN repeat-like/Quinoprotein amine dehydrogenase"/>
    <property type="match status" value="4"/>
</dbReference>
<dbReference type="InterPro" id="IPR011047">
    <property type="entry name" value="Quinoprotein_ADH-like_sf"/>
</dbReference>
<dbReference type="InterPro" id="IPR015943">
    <property type="entry name" value="WD40/YVTN_repeat-like_dom_sf"/>
</dbReference>
<dbReference type="InterPro" id="IPR056161">
    <property type="entry name" value="WD40_MABP1-WDR62_1st"/>
</dbReference>
<dbReference type="InterPro" id="IPR056162">
    <property type="entry name" value="WD40_MABP1-WDR62_2nd"/>
</dbReference>
<dbReference type="InterPro" id="IPR036322">
    <property type="entry name" value="WD40_repeat_dom_sf"/>
</dbReference>
<dbReference type="InterPro" id="IPR001680">
    <property type="entry name" value="WD40_rpt"/>
</dbReference>
<dbReference type="InterPro" id="IPR052779">
    <property type="entry name" value="WDR62"/>
</dbReference>
<dbReference type="InterPro" id="IPR056364">
    <property type="entry name" value="WDR62-MABP1_CC"/>
</dbReference>
<dbReference type="PANTHER" id="PTHR45589">
    <property type="entry name" value="WD REPEAT DOMAIN 62, ISOFORM G"/>
    <property type="match status" value="1"/>
</dbReference>
<dbReference type="PANTHER" id="PTHR45589:SF3">
    <property type="entry name" value="WD REPEAT-CONTAINING PROTEIN 62"/>
    <property type="match status" value="1"/>
</dbReference>
<dbReference type="Pfam" id="PF24780">
    <property type="entry name" value="WD40_MABP1-WDR62_1st"/>
    <property type="match status" value="1"/>
</dbReference>
<dbReference type="Pfam" id="PF24782">
    <property type="entry name" value="WD40_MABP1-WDR62_2nd"/>
    <property type="match status" value="1"/>
</dbReference>
<dbReference type="Pfam" id="PF24795">
    <property type="entry name" value="WDR62-MABP1_CC"/>
    <property type="match status" value="1"/>
</dbReference>
<dbReference type="SMART" id="SM00320">
    <property type="entry name" value="WD40"/>
    <property type="match status" value="12"/>
</dbReference>
<dbReference type="SUPFAM" id="SSF50998">
    <property type="entry name" value="Quinoprotein alcohol dehydrogenase-like"/>
    <property type="match status" value="1"/>
</dbReference>
<dbReference type="SUPFAM" id="SSF50978">
    <property type="entry name" value="WD40 repeat-like"/>
    <property type="match status" value="1"/>
</dbReference>
<dbReference type="PROSITE" id="PS50082">
    <property type="entry name" value="WD_REPEATS_2"/>
    <property type="match status" value="1"/>
</dbReference>
<dbReference type="PROSITE" id="PS50294">
    <property type="entry name" value="WD_REPEATS_REGION"/>
    <property type="match status" value="3"/>
</dbReference>
<protein>
    <recommendedName>
        <fullName>WD repeat-containing protein 62</fullName>
    </recommendedName>
</protein>
<keyword id="KW-0007">Acetylation</keyword>
<keyword id="KW-0963">Cytoplasm</keyword>
<keyword id="KW-0206">Cytoskeleton</keyword>
<keyword id="KW-0539">Nucleus</keyword>
<keyword id="KW-0597">Phosphoprotein</keyword>
<keyword id="KW-1185">Reference proteome</keyword>
<keyword id="KW-0677">Repeat</keyword>
<keyword id="KW-0853">WD repeat</keyword>
<proteinExistence type="inferred from homology"/>
<feature type="initiator methionine" description="Removed" evidence="1">
    <location>
        <position position="1"/>
    </location>
</feature>
<feature type="chain" id="PRO_0000281881" description="WD repeat-containing protein 62">
    <location>
        <begin position="2"/>
        <end position="1541"/>
    </location>
</feature>
<feature type="repeat" description="WD 1">
    <location>
        <begin position="109"/>
        <end position="150"/>
    </location>
</feature>
<feature type="repeat" description="WD 2">
    <location>
        <begin position="153"/>
        <end position="194"/>
    </location>
</feature>
<feature type="repeat" description="WD 3">
    <location>
        <begin position="196"/>
        <end position="234"/>
    </location>
</feature>
<feature type="repeat" description="WD 4">
    <location>
        <begin position="291"/>
        <end position="330"/>
    </location>
</feature>
<feature type="repeat" description="WD 5">
    <location>
        <begin position="357"/>
        <end position="396"/>
    </location>
</feature>
<feature type="repeat" description="WD 6">
    <location>
        <begin position="402"/>
        <end position="450"/>
    </location>
</feature>
<feature type="repeat" description="WD 7">
    <location>
        <begin position="490"/>
        <end position="529"/>
    </location>
</feature>
<feature type="repeat" description="WD 8">
    <location>
        <begin position="532"/>
        <end position="574"/>
    </location>
</feature>
<feature type="repeat" description="WD 9">
    <location>
        <begin position="578"/>
        <end position="618"/>
    </location>
</feature>
<feature type="repeat" description="WD 10">
    <location>
        <begin position="626"/>
        <end position="665"/>
    </location>
</feature>
<feature type="repeat" description="WD 11">
    <location>
        <begin position="671"/>
        <end position="713"/>
    </location>
</feature>
<feature type="repeat" description="WD 12">
    <location>
        <begin position="714"/>
        <end position="752"/>
    </location>
</feature>
<feature type="repeat" description="WD 13">
    <location>
        <begin position="803"/>
        <end position="846"/>
    </location>
</feature>
<feature type="repeat" description="WD 14">
    <location>
        <begin position="1138"/>
        <end position="1180"/>
    </location>
</feature>
<feature type="region of interest" description="Disordered" evidence="3">
    <location>
        <begin position="762"/>
        <end position="820"/>
    </location>
</feature>
<feature type="region of interest" description="Disordered" evidence="3">
    <location>
        <begin position="911"/>
        <end position="1050"/>
    </location>
</feature>
<feature type="region of interest" description="Disordered" evidence="3">
    <location>
        <begin position="1133"/>
        <end position="1153"/>
    </location>
</feature>
<feature type="region of interest" description="Disordered" evidence="3">
    <location>
        <begin position="1185"/>
        <end position="1212"/>
    </location>
</feature>
<feature type="region of interest" description="Disordered" evidence="3">
    <location>
        <begin position="1273"/>
        <end position="1293"/>
    </location>
</feature>
<feature type="compositionally biased region" description="Basic and acidic residues" evidence="3">
    <location>
        <begin position="770"/>
        <end position="780"/>
    </location>
</feature>
<feature type="compositionally biased region" description="Polar residues" evidence="3">
    <location>
        <begin position="781"/>
        <end position="795"/>
    </location>
</feature>
<feature type="compositionally biased region" description="Acidic residues" evidence="3">
    <location>
        <begin position="797"/>
        <end position="809"/>
    </location>
</feature>
<feature type="compositionally biased region" description="Basic and acidic residues" evidence="3">
    <location>
        <begin position="810"/>
        <end position="820"/>
    </location>
</feature>
<feature type="compositionally biased region" description="Low complexity" evidence="3">
    <location>
        <begin position="937"/>
        <end position="948"/>
    </location>
</feature>
<feature type="compositionally biased region" description="Pro residues" evidence="3">
    <location>
        <begin position="1008"/>
        <end position="1026"/>
    </location>
</feature>
<feature type="compositionally biased region" description="Pro residues" evidence="3">
    <location>
        <begin position="1193"/>
        <end position="1202"/>
    </location>
</feature>
<feature type="modified residue" description="N-acetylalanine" evidence="1">
    <location>
        <position position="2"/>
    </location>
</feature>
<feature type="modified residue" description="Phosphoserine" evidence="1">
    <location>
        <position position="33"/>
    </location>
</feature>
<feature type="modified residue" description="Phosphothreonine" evidence="1">
    <location>
        <position position="46"/>
    </location>
</feature>
<feature type="modified residue" description="Phosphoserine" evidence="1">
    <location>
        <position position="501"/>
    </location>
</feature>
<feature type="modified residue" description="Phosphoserine" evidence="2">
    <location>
        <position position="943"/>
    </location>
</feature>
<feature type="modified residue" description="Phosphothreonine" evidence="1">
    <location>
        <position position="1050"/>
    </location>
</feature>
<feature type="modified residue" description="Phosphoserine" evidence="1">
    <location>
        <position position="1095"/>
    </location>
</feature>
<feature type="modified residue" description="Phosphoserine" evidence="1">
    <location>
        <position position="1125"/>
    </location>
</feature>
<feature type="modified residue" description="Phosphoserine" evidence="1">
    <location>
        <position position="1151"/>
    </location>
</feature>
<feature type="modified residue" description="Phosphoserine" evidence="1">
    <location>
        <position position="1235"/>
    </location>
</feature>
<feature type="modified residue" description="Phosphoserine" evidence="1">
    <location>
        <position position="1255"/>
    </location>
</feature>
<feature type="modified residue" description="Phosphoserine" evidence="1">
    <location>
        <position position="1256"/>
    </location>
</feature>
<feature type="modified residue" description="Phosphothreonine" evidence="1">
    <location>
        <position position="1275"/>
    </location>
</feature>
<sequence length="1541" mass="168899">MAALGTGGYVRNDAVEKLPTIMAGVPARRAQSSPPPAPPLCLRRRTRLTAAPEDAVQNRVSLEKVLGITAQNSSGLTCDPGTGHVAYLAGCVVVILNPKENKQQHILNTARKSLSALAFSPDGKYIVTGENGHRPAVRIWDVEEKNQVAEMLGHKYGVACVAFSPNMKHIVSMGYQHDMVLNVWDWKKDIVVASNKVSCRVIALSFSEDSSYFVTVGNRHVRFWFLEVSTEAKVTGTVPLVGRSGILGELHDNVFCGVACGRGQMAGSTFCVSYSGLLCQFNEKRVLEKWINLKVSLSSCLCVSQELIFCGCTDGIVRIFQAHSLHYLANLPKPHYLGVDVAQGLEPSFLFHRKAEAVYPDTVALTFDPNHQWLSCVYKDHSIYIWDVKDINKVGKMWSELFHSSYVWNVEVYPEFEDQRACLPSGSFLTCSSDNTIRFWNLDSNPDSHWQKNIFSDTLLKVVYVESDIQHLQDMSHFPDRGSENGMAVDMKAGVRVMQVSPDGQHLASGDRSGNLRIHELHFMDELVRVEAHDAEVLCLEYSKPETGLTLLASASRDRLIHVLNVEKNYSLEQTLDDHSSSITAVKFTGSRDIQMISCGADKSIYFRSAQQASDGLHFVRTHHVAEKTTLYDMDIDITQKYVAVACQDRNVRVYNTVNGKQKKCYKGSQGDEGSLLKVHVDPSGTFLATSCSDKSISVIDFYSGECVAKMFGHSEIITGMKFTYDCRHLITVSGDSCVFIWHLGPEITNCMKQHLLEIDQREQPQQNTKDGKWSRDPRQETCTSMPSEISLSPGEQTEDELEEECEPEELLKTPSKESLDSDPRCLLTNGKLPLWAKRLLGDDDVADGSAFHAKRSYQPHGRWAERADQEPLKTILDARDLDCYFTPMKPESLEDSILDTVESQRLAGLLSQSESPQEDGCRHPSLTPPQRESSEVSELLCSLESEVTITGTDSKPCAEEGEGAPGDQQDDFYLRVPSITSKDLNPPEDSGESEADLECSFTAVHSPPRPDPDPPFDVAVPPAPGCPGATEELARPEVPGLSNGSLPQTPEQEKFLRHHFETLTDAPAEELFHGSLRDLKASEAKDDFFNPRLSISAQFLSRFQKPSRFTHTFPTRLPRHPMQSPEVKLTDLAGSQPRAEPLRAGTGYTSPGRTNVLSAGKAEEPLEAWSPLTSCLTGLAPCVSSSSVPPTDKTPPTPTALPTPGLAQGVHTPATSSYVEATAGSRAKMSRSISLEDSKGPVLAELARPPCRPSSLGELSSLGQELRAITTTVTPSSDSEGQEPALPSRGNHEARASLKLTLSSICDRLLLPPPQLEPSAMCVWSQEPVAIQPNVMVTTASFSAPSPVNVSASRLHNSTFLPRFLAPEPLNTSAHPNSPPLPEARPGVPGNITSLLESAPDALSPVHRCPGHCGQPRVPARVPPPGPLELSNVGSIVHRLQTAFQEALDLYHMMVSRDEVSAEQQQAQTELASTFLWIHSQLEANDWLVGTDGAPAQALPSPGPPSPPTLCPLASPDLHALLEHYSELLVQAVRRKAQRD</sequence>
<gene>
    <name type="primary">WDR62</name>
</gene>
<comment type="function">
    <text evidence="1">Required for cerebral cortical development. Plays a role in neuronal proliferation and migration (By similarity). Plays a role in mother-centriole-dependent centriole duplication; the function seems also to involve CEP152, CDK5RAP2 and CEP63 through a stepwise assembled complex at the centrosome that recruits CDK2 required for centriole duplication (By similarity).</text>
</comment>
<comment type="subunit">
    <text evidence="1">Can form homodimers (via C-terminus). Interacts (via C-terminus) with MAPKBP1 (via C-terminus). Interacts with CDK5RAP2, CEP152, CEP63 and KIAA0753. CEP63, CDK5RAP2, CEP152, WDR62 are proposed to form a stepwise assembled complex at the centrosome forming a ring near parental centrioles.</text>
</comment>
<comment type="subcellular location">
    <subcellularLocation>
        <location evidence="1">Nucleus</location>
    </subcellularLocation>
    <subcellularLocation>
        <location evidence="1">Cytoplasm</location>
        <location evidence="1">Cytoskeleton</location>
        <location evidence="1">Spindle pole</location>
    </subcellularLocation>
    <subcellularLocation>
        <location evidence="1">Cytoplasm</location>
        <location evidence="1">Cytoskeleton</location>
        <location evidence="1">Microtubule organizing center</location>
        <location evidence="1">Centrosome</location>
    </subcellularLocation>
    <subcellularLocation>
        <location evidence="1">Cytoplasm</location>
        <location evidence="1">Cytoskeleton</location>
        <location evidence="1">Microtubule organizing center</location>
        <location evidence="1">Centrosome</location>
        <location evidence="1">Centriole</location>
    </subcellularLocation>
    <text evidence="1">Shows cell cycle-dependent localization. Accumulates to the spindle pole during mitosis (By similarity). Colocalizes with CDK5RAP2, CEP152 and WDR62 in a discrete ring around the proximal end of the parental centriole. At this site, a cohesive structure is predicted to engage parental centrioles and procentrioles (By similarity).</text>
</comment>
<evidence type="ECO:0000250" key="1">
    <source>
        <dbReference type="UniProtKB" id="O43379"/>
    </source>
</evidence>
<evidence type="ECO:0000250" key="2">
    <source>
        <dbReference type="UniProtKB" id="Q3U3T8"/>
    </source>
</evidence>
<evidence type="ECO:0000256" key="3">
    <source>
        <dbReference type="SAM" id="MobiDB-lite"/>
    </source>
</evidence>